<organism>
    <name type="scientific">Ruminiclostridium cellulolyticum (strain ATCC 35319 / DSM 5812 / JCM 6584 / H10)</name>
    <name type="common">Clostridium cellulolyticum</name>
    <dbReference type="NCBI Taxonomy" id="394503"/>
    <lineage>
        <taxon>Bacteria</taxon>
        <taxon>Bacillati</taxon>
        <taxon>Bacillota</taxon>
        <taxon>Clostridia</taxon>
        <taxon>Eubacteriales</taxon>
        <taxon>Oscillospiraceae</taxon>
        <taxon>Ruminiclostridium</taxon>
    </lineage>
</organism>
<sequence length="316" mass="35371">MKWYEVRVSTTDEASDAVSEMLTTMGAGGVAIKDPFDIKKEILKPNSLDYADDEFLESLGEDVVIQAYFQSGNDIDKLLKQINEGLVNISQFLNIGKGLEGYNEVDDEDWSTAWKKYYKPLQLTDRIVIKPTWEDYSPNADEIVIQMDPGMAFGTGTHETTQMCSILLDKYMKDDTEVLDIGCGTGILSIIAAKLGAKQVEAIDIDEVAVKVARENIELNQEITKVSARKAVLSDLKAEEHKYDIIVANIIANVIIDLSSQIPYYLKKESLFITSGIIKERKQEVIDACEKNGMSRIETLEMGEWVAMVFKCPDTL</sequence>
<dbReference type="EC" id="2.1.1.-" evidence="1"/>
<dbReference type="EMBL" id="CP001348">
    <property type="protein sequence ID" value="ACL76146.1"/>
    <property type="molecule type" value="Genomic_DNA"/>
</dbReference>
<dbReference type="RefSeq" id="WP_015925261.1">
    <property type="nucleotide sequence ID" value="NC_011898.1"/>
</dbReference>
<dbReference type="SMR" id="B8I303"/>
<dbReference type="STRING" id="394503.Ccel_1796"/>
<dbReference type="KEGG" id="cce:Ccel_1796"/>
<dbReference type="eggNOG" id="COG2264">
    <property type="taxonomic scope" value="Bacteria"/>
</dbReference>
<dbReference type="HOGENOM" id="CLU_049382_0_1_9"/>
<dbReference type="OrthoDB" id="9785995at2"/>
<dbReference type="Proteomes" id="UP000001349">
    <property type="component" value="Chromosome"/>
</dbReference>
<dbReference type="GO" id="GO:0005737">
    <property type="term" value="C:cytoplasm"/>
    <property type="evidence" value="ECO:0007669"/>
    <property type="project" value="UniProtKB-SubCell"/>
</dbReference>
<dbReference type="GO" id="GO:0016279">
    <property type="term" value="F:protein-lysine N-methyltransferase activity"/>
    <property type="evidence" value="ECO:0007669"/>
    <property type="project" value="RHEA"/>
</dbReference>
<dbReference type="GO" id="GO:0032259">
    <property type="term" value="P:methylation"/>
    <property type="evidence" value="ECO:0007669"/>
    <property type="project" value="UniProtKB-KW"/>
</dbReference>
<dbReference type="CDD" id="cd02440">
    <property type="entry name" value="AdoMet_MTases"/>
    <property type="match status" value="1"/>
</dbReference>
<dbReference type="Gene3D" id="3.40.50.150">
    <property type="entry name" value="Vaccinia Virus protein VP39"/>
    <property type="match status" value="1"/>
</dbReference>
<dbReference type="HAMAP" id="MF_00735">
    <property type="entry name" value="Methyltr_PrmA"/>
    <property type="match status" value="1"/>
</dbReference>
<dbReference type="InterPro" id="IPR050078">
    <property type="entry name" value="Ribosomal_L11_MeTrfase_PrmA"/>
</dbReference>
<dbReference type="InterPro" id="IPR004498">
    <property type="entry name" value="Ribosomal_PrmA_MeTrfase"/>
</dbReference>
<dbReference type="InterPro" id="IPR029063">
    <property type="entry name" value="SAM-dependent_MTases_sf"/>
</dbReference>
<dbReference type="NCBIfam" id="TIGR00406">
    <property type="entry name" value="prmA"/>
    <property type="match status" value="1"/>
</dbReference>
<dbReference type="PANTHER" id="PTHR43648">
    <property type="entry name" value="ELECTRON TRANSFER FLAVOPROTEIN BETA SUBUNIT LYSINE METHYLTRANSFERASE"/>
    <property type="match status" value="1"/>
</dbReference>
<dbReference type="PANTHER" id="PTHR43648:SF1">
    <property type="entry name" value="ELECTRON TRANSFER FLAVOPROTEIN BETA SUBUNIT LYSINE METHYLTRANSFERASE"/>
    <property type="match status" value="1"/>
</dbReference>
<dbReference type="Pfam" id="PF06325">
    <property type="entry name" value="PrmA"/>
    <property type="match status" value="1"/>
</dbReference>
<dbReference type="PIRSF" id="PIRSF000401">
    <property type="entry name" value="RPL11_MTase"/>
    <property type="match status" value="1"/>
</dbReference>
<dbReference type="SUPFAM" id="SSF53335">
    <property type="entry name" value="S-adenosyl-L-methionine-dependent methyltransferases"/>
    <property type="match status" value="1"/>
</dbReference>
<reference key="1">
    <citation type="submission" date="2009-01" db="EMBL/GenBank/DDBJ databases">
        <title>Complete sequence of Clostridium cellulolyticum H10.</title>
        <authorList>
            <consortium name="US DOE Joint Genome Institute"/>
            <person name="Lucas S."/>
            <person name="Copeland A."/>
            <person name="Lapidus A."/>
            <person name="Glavina del Rio T."/>
            <person name="Dalin E."/>
            <person name="Tice H."/>
            <person name="Bruce D."/>
            <person name="Goodwin L."/>
            <person name="Pitluck S."/>
            <person name="Chertkov O."/>
            <person name="Saunders E."/>
            <person name="Brettin T."/>
            <person name="Detter J.C."/>
            <person name="Han C."/>
            <person name="Larimer F."/>
            <person name="Land M."/>
            <person name="Hauser L."/>
            <person name="Kyrpides N."/>
            <person name="Ivanova N."/>
            <person name="Zhou J."/>
            <person name="Richardson P."/>
        </authorList>
    </citation>
    <scope>NUCLEOTIDE SEQUENCE [LARGE SCALE GENOMIC DNA]</scope>
    <source>
        <strain>ATCC 35319 / DSM 5812 / JCM 6584 / H10</strain>
    </source>
</reference>
<protein>
    <recommendedName>
        <fullName evidence="1">Ribosomal protein L11 methyltransferase</fullName>
        <shortName evidence="1">L11 Mtase</shortName>
        <ecNumber evidence="1">2.1.1.-</ecNumber>
    </recommendedName>
</protein>
<comment type="function">
    <text evidence="1">Methylates ribosomal protein L11.</text>
</comment>
<comment type="catalytic activity">
    <reaction evidence="1">
        <text>L-lysyl-[protein] + 3 S-adenosyl-L-methionine = N(6),N(6),N(6)-trimethyl-L-lysyl-[protein] + 3 S-adenosyl-L-homocysteine + 3 H(+)</text>
        <dbReference type="Rhea" id="RHEA:54192"/>
        <dbReference type="Rhea" id="RHEA-COMP:9752"/>
        <dbReference type="Rhea" id="RHEA-COMP:13826"/>
        <dbReference type="ChEBI" id="CHEBI:15378"/>
        <dbReference type="ChEBI" id="CHEBI:29969"/>
        <dbReference type="ChEBI" id="CHEBI:57856"/>
        <dbReference type="ChEBI" id="CHEBI:59789"/>
        <dbReference type="ChEBI" id="CHEBI:61961"/>
    </reaction>
</comment>
<comment type="subcellular location">
    <subcellularLocation>
        <location evidence="1">Cytoplasm</location>
    </subcellularLocation>
</comment>
<comment type="similarity">
    <text evidence="1">Belongs to the methyltransferase superfamily. PrmA family.</text>
</comment>
<gene>
    <name evidence="1" type="primary">prmA</name>
    <name type="ordered locus">Ccel_1796</name>
</gene>
<accession>B8I303</accession>
<name>PRMA_RUMCH</name>
<evidence type="ECO:0000255" key="1">
    <source>
        <dbReference type="HAMAP-Rule" id="MF_00735"/>
    </source>
</evidence>
<feature type="chain" id="PRO_1000192607" description="Ribosomal protein L11 methyltransferase">
    <location>
        <begin position="1"/>
        <end position="316"/>
    </location>
</feature>
<feature type="binding site" evidence="1">
    <location>
        <position position="161"/>
    </location>
    <ligand>
        <name>S-adenosyl-L-methionine</name>
        <dbReference type="ChEBI" id="CHEBI:59789"/>
    </ligand>
</feature>
<feature type="binding site" evidence="1">
    <location>
        <position position="182"/>
    </location>
    <ligand>
        <name>S-adenosyl-L-methionine</name>
        <dbReference type="ChEBI" id="CHEBI:59789"/>
    </ligand>
</feature>
<feature type="binding site" evidence="1">
    <location>
        <position position="204"/>
    </location>
    <ligand>
        <name>S-adenosyl-L-methionine</name>
        <dbReference type="ChEBI" id="CHEBI:59789"/>
    </ligand>
</feature>
<feature type="binding site" evidence="1">
    <location>
        <position position="249"/>
    </location>
    <ligand>
        <name>S-adenosyl-L-methionine</name>
        <dbReference type="ChEBI" id="CHEBI:59789"/>
    </ligand>
</feature>
<proteinExistence type="inferred from homology"/>
<keyword id="KW-0963">Cytoplasm</keyword>
<keyword id="KW-0489">Methyltransferase</keyword>
<keyword id="KW-1185">Reference proteome</keyword>
<keyword id="KW-0949">S-adenosyl-L-methionine</keyword>
<keyword id="KW-0808">Transferase</keyword>